<reference key="1">
    <citation type="journal article" date="2002" name="Nature">
        <title>The genome sequence of Schizosaccharomyces pombe.</title>
        <authorList>
            <person name="Wood V."/>
            <person name="Gwilliam R."/>
            <person name="Rajandream M.A."/>
            <person name="Lyne M.H."/>
            <person name="Lyne R."/>
            <person name="Stewart A."/>
            <person name="Sgouros J.G."/>
            <person name="Peat N."/>
            <person name="Hayles J."/>
            <person name="Baker S.G."/>
            <person name="Basham D."/>
            <person name="Bowman S."/>
            <person name="Brooks K."/>
            <person name="Brown D."/>
            <person name="Brown S."/>
            <person name="Chillingworth T."/>
            <person name="Churcher C.M."/>
            <person name="Collins M."/>
            <person name="Connor R."/>
            <person name="Cronin A."/>
            <person name="Davis P."/>
            <person name="Feltwell T."/>
            <person name="Fraser A."/>
            <person name="Gentles S."/>
            <person name="Goble A."/>
            <person name="Hamlin N."/>
            <person name="Harris D.E."/>
            <person name="Hidalgo J."/>
            <person name="Hodgson G."/>
            <person name="Holroyd S."/>
            <person name="Hornsby T."/>
            <person name="Howarth S."/>
            <person name="Huckle E.J."/>
            <person name="Hunt S."/>
            <person name="Jagels K."/>
            <person name="James K.D."/>
            <person name="Jones L."/>
            <person name="Jones M."/>
            <person name="Leather S."/>
            <person name="McDonald S."/>
            <person name="McLean J."/>
            <person name="Mooney P."/>
            <person name="Moule S."/>
            <person name="Mungall K.L."/>
            <person name="Murphy L.D."/>
            <person name="Niblett D."/>
            <person name="Odell C."/>
            <person name="Oliver K."/>
            <person name="O'Neil S."/>
            <person name="Pearson D."/>
            <person name="Quail M.A."/>
            <person name="Rabbinowitsch E."/>
            <person name="Rutherford K.M."/>
            <person name="Rutter S."/>
            <person name="Saunders D."/>
            <person name="Seeger K."/>
            <person name="Sharp S."/>
            <person name="Skelton J."/>
            <person name="Simmonds M.N."/>
            <person name="Squares R."/>
            <person name="Squares S."/>
            <person name="Stevens K."/>
            <person name="Taylor K."/>
            <person name="Taylor R.G."/>
            <person name="Tivey A."/>
            <person name="Walsh S.V."/>
            <person name="Warren T."/>
            <person name="Whitehead S."/>
            <person name="Woodward J.R."/>
            <person name="Volckaert G."/>
            <person name="Aert R."/>
            <person name="Robben J."/>
            <person name="Grymonprez B."/>
            <person name="Weltjens I."/>
            <person name="Vanstreels E."/>
            <person name="Rieger M."/>
            <person name="Schaefer M."/>
            <person name="Mueller-Auer S."/>
            <person name="Gabel C."/>
            <person name="Fuchs M."/>
            <person name="Duesterhoeft A."/>
            <person name="Fritzc C."/>
            <person name="Holzer E."/>
            <person name="Moestl D."/>
            <person name="Hilbert H."/>
            <person name="Borzym K."/>
            <person name="Langer I."/>
            <person name="Beck A."/>
            <person name="Lehrach H."/>
            <person name="Reinhardt R."/>
            <person name="Pohl T.M."/>
            <person name="Eger P."/>
            <person name="Zimmermann W."/>
            <person name="Wedler H."/>
            <person name="Wambutt R."/>
            <person name="Purnelle B."/>
            <person name="Goffeau A."/>
            <person name="Cadieu E."/>
            <person name="Dreano S."/>
            <person name="Gloux S."/>
            <person name="Lelaure V."/>
            <person name="Mottier S."/>
            <person name="Galibert F."/>
            <person name="Aves S.J."/>
            <person name="Xiang Z."/>
            <person name="Hunt C."/>
            <person name="Moore K."/>
            <person name="Hurst S.M."/>
            <person name="Lucas M."/>
            <person name="Rochet M."/>
            <person name="Gaillardin C."/>
            <person name="Tallada V.A."/>
            <person name="Garzon A."/>
            <person name="Thode G."/>
            <person name="Daga R.R."/>
            <person name="Cruzado L."/>
            <person name="Jimenez J."/>
            <person name="Sanchez M."/>
            <person name="del Rey F."/>
            <person name="Benito J."/>
            <person name="Dominguez A."/>
            <person name="Revuelta J.L."/>
            <person name="Moreno S."/>
            <person name="Armstrong J."/>
            <person name="Forsburg S.L."/>
            <person name="Cerutti L."/>
            <person name="Lowe T."/>
            <person name="McCombie W.R."/>
            <person name="Paulsen I."/>
            <person name="Potashkin J."/>
            <person name="Shpakovski G.V."/>
            <person name="Ussery D."/>
            <person name="Barrell B.G."/>
            <person name="Nurse P."/>
        </authorList>
    </citation>
    <scope>NUCLEOTIDE SEQUENCE [LARGE SCALE GENOMIC DNA]</scope>
    <source>
        <strain>972 / ATCC 24843</strain>
    </source>
</reference>
<reference key="2">
    <citation type="journal article" date="2006" name="Nat. Biotechnol.">
        <title>ORFeome cloning and global analysis of protein localization in the fission yeast Schizosaccharomyces pombe.</title>
        <authorList>
            <person name="Matsuyama A."/>
            <person name="Arai R."/>
            <person name="Yashiroda Y."/>
            <person name="Shirai A."/>
            <person name="Kamata A."/>
            <person name="Sekido S."/>
            <person name="Kobayashi Y."/>
            <person name="Hashimoto A."/>
            <person name="Hamamoto M."/>
            <person name="Hiraoka Y."/>
            <person name="Horinouchi S."/>
            <person name="Yoshida M."/>
        </authorList>
    </citation>
    <scope>SUBCELLULAR LOCATION [LARGE SCALE ANALYSIS]</scope>
</reference>
<feature type="chain" id="PRO_0000304013" description="Uncharacterized protein C1685.04">
    <location>
        <begin position="1"/>
        <end position="325"/>
    </location>
</feature>
<feature type="region of interest" description="Disordered" evidence="2">
    <location>
        <begin position="1"/>
        <end position="32"/>
    </location>
</feature>
<feature type="coiled-coil region" evidence="1">
    <location>
        <begin position="135"/>
        <end position="223"/>
    </location>
</feature>
<feature type="compositionally biased region" description="Low complexity" evidence="2">
    <location>
        <begin position="23"/>
        <end position="32"/>
    </location>
</feature>
<name>YH04_SCHPO</name>
<protein>
    <recommendedName>
        <fullName>Uncharacterized protein C1685.04</fullName>
    </recommendedName>
</protein>
<dbReference type="EMBL" id="CU329671">
    <property type="protein sequence ID" value="CAA20052.1"/>
    <property type="molecule type" value="Genomic_DNA"/>
</dbReference>
<dbReference type="PIR" id="T39520">
    <property type="entry name" value="T39520"/>
</dbReference>
<dbReference type="RefSeq" id="NP_595208.1">
    <property type="nucleotide sequence ID" value="NM_001021115.2"/>
</dbReference>
<dbReference type="SMR" id="O74324"/>
<dbReference type="BioGRID" id="276292">
    <property type="interactions" value="37"/>
</dbReference>
<dbReference type="iPTMnet" id="O74324"/>
<dbReference type="PaxDb" id="4896-SPBC1685.04.1"/>
<dbReference type="EnsemblFungi" id="SPBC1685.04.1">
    <property type="protein sequence ID" value="SPBC1685.04.1:pep"/>
    <property type="gene ID" value="SPBC1685.04"/>
</dbReference>
<dbReference type="KEGG" id="spo:2539740"/>
<dbReference type="PomBase" id="SPBC1685.04"/>
<dbReference type="VEuPathDB" id="FungiDB:SPBC1685.04"/>
<dbReference type="HOGENOM" id="CLU_863714_0_0_1"/>
<dbReference type="InParanoid" id="O74324"/>
<dbReference type="OMA" id="IWCEECE"/>
<dbReference type="PhylomeDB" id="O74324"/>
<dbReference type="PRO" id="PR:O74324"/>
<dbReference type="Proteomes" id="UP000002485">
    <property type="component" value="Chromosome II"/>
</dbReference>
<dbReference type="GO" id="GO:0005737">
    <property type="term" value="C:cytoplasm"/>
    <property type="evidence" value="ECO:0007005"/>
    <property type="project" value="PomBase"/>
</dbReference>
<dbReference type="GO" id="GO:0044732">
    <property type="term" value="C:mitotic spindle pole body"/>
    <property type="evidence" value="ECO:0007005"/>
    <property type="project" value="PomBase"/>
</dbReference>
<dbReference type="GO" id="GO:0005634">
    <property type="term" value="C:nucleus"/>
    <property type="evidence" value="ECO:0007005"/>
    <property type="project" value="PomBase"/>
</dbReference>
<comment type="subcellular location">
    <subcellularLocation>
        <location evidence="3">Cytoplasm</location>
    </subcellularLocation>
    <subcellularLocation>
        <location evidence="3">Cytoplasm</location>
        <location evidence="3">Cytoskeleton</location>
        <location evidence="3">Microtubule organizing center</location>
        <location evidence="3">Spindle pole body</location>
    </subcellularLocation>
</comment>
<organism>
    <name type="scientific">Schizosaccharomyces pombe (strain 972 / ATCC 24843)</name>
    <name type="common">Fission yeast</name>
    <dbReference type="NCBI Taxonomy" id="284812"/>
    <lineage>
        <taxon>Eukaryota</taxon>
        <taxon>Fungi</taxon>
        <taxon>Dikarya</taxon>
        <taxon>Ascomycota</taxon>
        <taxon>Taphrinomycotina</taxon>
        <taxon>Schizosaccharomycetes</taxon>
        <taxon>Schizosaccharomycetales</taxon>
        <taxon>Schizosaccharomycetaceae</taxon>
        <taxon>Schizosaccharomyces</taxon>
    </lineage>
</organism>
<proteinExistence type="predicted"/>
<keyword id="KW-0175">Coiled coil</keyword>
<keyword id="KW-0963">Cytoplasm</keyword>
<keyword id="KW-0206">Cytoskeleton</keyword>
<keyword id="KW-1185">Reference proteome</keyword>
<evidence type="ECO:0000255" key="1"/>
<evidence type="ECO:0000256" key="2">
    <source>
        <dbReference type="SAM" id="MobiDB-lite"/>
    </source>
</evidence>
<evidence type="ECO:0000269" key="3">
    <source>
    </source>
</evidence>
<sequence length="325" mass="37018">MKQEYIPLDEFPNKSNEGMLNDEGTSSSGLSTRTRSLELFDNMEESGSFPKVERKIQSLLDELAEVLFQSKQPNDLTRIRKAIAEQLQLWCQACQENADLYRSQQRKLKSRWDSQTDILSQIESTKASLAEVHKAEEISNLKTSITHLDEEIQILQEKLAIVTNQRNTLVKRLQTYDNLEKKKALSMEDRLLTLQEQYDAHANVSSLEKRMEVLKKREDLLRLMVGQALPGMQFFQRLIHQIQAVETKLISILGPTSLSEAALPPLTDVQRTSVLSLLTSTLHSLESARQIADSNTWKPIIVCLELEIVYFENMLTAITSTPVSS</sequence>
<accession>O74324</accession>
<gene>
    <name type="ORF">SPBC1685.04</name>
</gene>